<keyword id="KW-0444">Lipid biosynthesis</keyword>
<keyword id="KW-0443">Lipid metabolism</keyword>
<keyword id="KW-0460">Magnesium</keyword>
<keyword id="KW-0479">Metal-binding</keyword>
<keyword id="KW-0594">Phospholipid biosynthesis</keyword>
<keyword id="KW-1208">Phospholipid metabolism</keyword>
<keyword id="KW-1185">Reference proteome</keyword>
<keyword id="KW-0808">Transferase</keyword>
<reference key="1">
    <citation type="journal article" date="2005" name="J. Bacteriol.">
        <title>Insights on evolution of virulence and resistance from the complete genome analysis of an early methicillin-resistant Staphylococcus aureus strain and a biofilm-producing methicillin-resistant Staphylococcus epidermidis strain.</title>
        <authorList>
            <person name="Gill S.R."/>
            <person name="Fouts D.E."/>
            <person name="Archer G.L."/>
            <person name="Mongodin E.F."/>
            <person name="DeBoy R.T."/>
            <person name="Ravel J."/>
            <person name="Paulsen I.T."/>
            <person name="Kolonay J.F."/>
            <person name="Brinkac L.M."/>
            <person name="Beanan M.J."/>
            <person name="Dodson R.J."/>
            <person name="Daugherty S.C."/>
            <person name="Madupu R."/>
            <person name="Angiuoli S.V."/>
            <person name="Durkin A.S."/>
            <person name="Haft D.H."/>
            <person name="Vamathevan J.J."/>
            <person name="Khouri H."/>
            <person name="Utterback T.R."/>
            <person name="Lee C."/>
            <person name="Dimitrov G."/>
            <person name="Jiang L."/>
            <person name="Qin H."/>
            <person name="Weidman J."/>
            <person name="Tran K."/>
            <person name="Kang K.H."/>
            <person name="Hance I.R."/>
            <person name="Nelson K.E."/>
            <person name="Fraser C.M."/>
        </authorList>
    </citation>
    <scope>NUCLEOTIDE SEQUENCE [LARGE SCALE GENOMIC DNA]</scope>
    <source>
        <strain>ATCC 35984 / DSM 28319 / BCRC 17069 / CCUG 31568 / BM 3577 / RP62A</strain>
    </source>
</reference>
<gene>
    <name evidence="1" type="primary">pcrB</name>
    <name type="ordered locus">SERP1444</name>
</gene>
<name>PCRB_STAEQ</name>
<dbReference type="EC" id="2.5.1.n9" evidence="1"/>
<dbReference type="EMBL" id="CP000029">
    <property type="protein sequence ID" value="AAW54832.1"/>
    <property type="molecule type" value="Genomic_DNA"/>
</dbReference>
<dbReference type="RefSeq" id="WP_001830396.1">
    <property type="nucleotide sequence ID" value="NC_002976.3"/>
</dbReference>
<dbReference type="SMR" id="Q5HN28"/>
<dbReference type="STRING" id="176279.SERP1444"/>
<dbReference type="KEGG" id="ser:SERP1444"/>
<dbReference type="eggNOG" id="COG1646">
    <property type="taxonomic scope" value="Bacteria"/>
</dbReference>
<dbReference type="HOGENOM" id="CLU_095211_0_0_9"/>
<dbReference type="UniPathway" id="UPA00940"/>
<dbReference type="Proteomes" id="UP000000531">
    <property type="component" value="Chromosome"/>
</dbReference>
<dbReference type="GO" id="GO:0120536">
    <property type="term" value="F:heptaprenylglyceryl phosphate synthase activity"/>
    <property type="evidence" value="ECO:0007669"/>
    <property type="project" value="RHEA"/>
</dbReference>
<dbReference type="GO" id="GO:0000287">
    <property type="term" value="F:magnesium ion binding"/>
    <property type="evidence" value="ECO:0007669"/>
    <property type="project" value="UniProtKB-UniRule"/>
</dbReference>
<dbReference type="GO" id="GO:0046474">
    <property type="term" value="P:glycerophospholipid biosynthetic process"/>
    <property type="evidence" value="ECO:0007669"/>
    <property type="project" value="UniProtKB-UniRule"/>
</dbReference>
<dbReference type="CDD" id="cd02812">
    <property type="entry name" value="PcrB_like"/>
    <property type="match status" value="1"/>
</dbReference>
<dbReference type="FunFam" id="3.20.20.390:FF:000001">
    <property type="entry name" value="Heptaprenylglyceryl phosphate synthase"/>
    <property type="match status" value="1"/>
</dbReference>
<dbReference type="Gene3D" id="3.20.20.390">
    <property type="entry name" value="FMN-linked oxidoreductases"/>
    <property type="match status" value="1"/>
</dbReference>
<dbReference type="HAMAP" id="MF_00112">
    <property type="entry name" value="GGGP_HepGP_synthase"/>
    <property type="match status" value="1"/>
</dbReference>
<dbReference type="InterPro" id="IPR039074">
    <property type="entry name" value="GGGP/HepGP_synthase_I"/>
</dbReference>
<dbReference type="InterPro" id="IPR038597">
    <property type="entry name" value="GGGP/HepGP_synthase_sf"/>
</dbReference>
<dbReference type="InterPro" id="IPR008205">
    <property type="entry name" value="GGGP_HepGP_synthase"/>
</dbReference>
<dbReference type="NCBIfam" id="TIGR01768">
    <property type="entry name" value="GGGP-family"/>
    <property type="match status" value="1"/>
</dbReference>
<dbReference type="NCBIfam" id="NF003197">
    <property type="entry name" value="PRK04169.1-1"/>
    <property type="match status" value="1"/>
</dbReference>
<dbReference type="NCBIfam" id="NF003199">
    <property type="entry name" value="PRK04169.1-3"/>
    <property type="match status" value="1"/>
</dbReference>
<dbReference type="NCBIfam" id="NF003200">
    <property type="entry name" value="PRK04169.1-4"/>
    <property type="match status" value="1"/>
</dbReference>
<dbReference type="PANTHER" id="PTHR40029">
    <property type="match status" value="1"/>
</dbReference>
<dbReference type="PANTHER" id="PTHR40029:SF2">
    <property type="entry name" value="HEPTAPRENYLGLYCERYL PHOSPHATE SYNTHASE"/>
    <property type="match status" value="1"/>
</dbReference>
<dbReference type="Pfam" id="PF01884">
    <property type="entry name" value="PcrB"/>
    <property type="match status" value="1"/>
</dbReference>
<dbReference type="SUPFAM" id="SSF51395">
    <property type="entry name" value="FMN-linked oxidoreductases"/>
    <property type="match status" value="1"/>
</dbReference>
<protein>
    <recommendedName>
        <fullName evidence="1">Heptaprenylglyceryl phosphate synthase</fullName>
        <shortName evidence="1">HepGP synthase</shortName>
        <ecNumber evidence="1">2.5.1.n9</ecNumber>
    </recommendedName>
    <alternativeName>
        <fullName evidence="1">Glycerol-1-phosphate heptaprenyltransferase</fullName>
    </alternativeName>
</protein>
<evidence type="ECO:0000255" key="1">
    <source>
        <dbReference type="HAMAP-Rule" id="MF_00112"/>
    </source>
</evidence>
<feature type="chain" id="PRO_0000138725" description="Heptaprenylglyceryl phosphate synthase">
    <location>
        <begin position="1"/>
        <end position="230"/>
    </location>
</feature>
<feature type="binding site" evidence="1">
    <location>
        <position position="12"/>
    </location>
    <ligand>
        <name>sn-glycerol 1-phosphate</name>
        <dbReference type="ChEBI" id="CHEBI:57685"/>
    </ligand>
</feature>
<feature type="binding site" evidence="1">
    <location>
        <position position="14"/>
    </location>
    <ligand>
        <name>Mg(2+)</name>
        <dbReference type="ChEBI" id="CHEBI:18420"/>
    </ligand>
</feature>
<feature type="binding site" evidence="1">
    <location>
        <position position="40"/>
    </location>
    <ligand>
        <name>Mg(2+)</name>
        <dbReference type="ChEBI" id="CHEBI:18420"/>
    </ligand>
</feature>
<feature type="binding site" evidence="1">
    <location>
        <begin position="159"/>
        <end position="164"/>
    </location>
    <ligand>
        <name>sn-glycerol 1-phosphate</name>
        <dbReference type="ChEBI" id="CHEBI:57685"/>
    </ligand>
</feature>
<feature type="binding site" evidence="1">
    <location>
        <position position="189"/>
    </location>
    <ligand>
        <name>sn-glycerol 1-phosphate</name>
        <dbReference type="ChEBI" id="CHEBI:57685"/>
    </ligand>
</feature>
<feature type="binding site" evidence="1">
    <location>
        <begin position="209"/>
        <end position="210"/>
    </location>
    <ligand>
        <name>sn-glycerol 1-phosphate</name>
        <dbReference type="ChEBI" id="CHEBI:57685"/>
    </ligand>
</feature>
<accession>Q5HN28</accession>
<comment type="function">
    <text evidence="1">Prenyltransferase that catalyzes in vivo the transfer of the heptaprenyl moiety of heptaprenyl pyrophosphate (HepPP; 35 carbon atoms) to the C3 hydroxyl of sn-glycerol-1-phosphate (G1P), producing heptaprenylglyceryl phosphate (HepGP). This reaction is an ether-bond-formation step in the biosynthesis of archaea-type G1P-based membrane lipids found in Bacillales.</text>
</comment>
<comment type="catalytic activity">
    <reaction evidence="1">
        <text>sn-glycerol 1-phosphate + all-trans-heptaprenyl diphosphate = 3-heptaprenyl-sn-glycero-1-phosphate + diphosphate</text>
        <dbReference type="Rhea" id="RHEA:33495"/>
        <dbReference type="ChEBI" id="CHEBI:33019"/>
        <dbReference type="ChEBI" id="CHEBI:57685"/>
        <dbReference type="ChEBI" id="CHEBI:58206"/>
        <dbReference type="ChEBI" id="CHEBI:64781"/>
        <dbReference type="EC" id="2.5.1.n9"/>
    </reaction>
</comment>
<comment type="cofactor">
    <cofactor evidence="1">
        <name>Mg(2+)</name>
        <dbReference type="ChEBI" id="CHEBI:18420"/>
    </cofactor>
</comment>
<comment type="pathway">
    <text evidence="1">Membrane lipid metabolism; glycerophospholipid metabolism.</text>
</comment>
<comment type="subunit">
    <text evidence="1">Homodimer.</text>
</comment>
<comment type="similarity">
    <text evidence="1">Belongs to the GGGP/HepGP synthase family. Group I subfamily.</text>
</comment>
<sequence>MYDITKWKHMFKLDPAKSISDENLEALCMSNTDAIIIGGTDDVTEDNVIHLMSRVRRYPLPLVLEVSNVESVMPGFDFYFIPTVMNSKDTKYHNEILLEALKKYGHVINFDEVFFEGYVVLNANSKVAKITKAYTQLGIEDVEAYAQMAEELYRFPIMYVEYSGTYGDVDKVKAIANMLQHTQLFYGGGITNIDKANEMSNIADTIVVGDIIYNDIKKALKTVKIKESNK</sequence>
<organism>
    <name type="scientific">Staphylococcus epidermidis (strain ATCC 35984 / DSM 28319 / BCRC 17069 / CCUG 31568 / BM 3577 / RP62A)</name>
    <dbReference type="NCBI Taxonomy" id="176279"/>
    <lineage>
        <taxon>Bacteria</taxon>
        <taxon>Bacillati</taxon>
        <taxon>Bacillota</taxon>
        <taxon>Bacilli</taxon>
        <taxon>Bacillales</taxon>
        <taxon>Staphylococcaceae</taxon>
        <taxon>Staphylococcus</taxon>
    </lineage>
</organism>
<proteinExistence type="inferred from homology"/>